<reference key="1">
    <citation type="journal article" date="2008" name="J. Bacteriol.">
        <title>Genome sequence of the fish pathogen Renibacterium salmoninarum suggests reductive evolution away from an environmental Arthrobacter ancestor.</title>
        <authorList>
            <person name="Wiens G.D."/>
            <person name="Rockey D.D."/>
            <person name="Wu Z."/>
            <person name="Chang J."/>
            <person name="Levy R."/>
            <person name="Crane S."/>
            <person name="Chen D.S."/>
            <person name="Capri G.R."/>
            <person name="Burnett J.R."/>
            <person name="Sudheesh P.S."/>
            <person name="Schipma M.J."/>
            <person name="Burd H."/>
            <person name="Bhattacharyya A."/>
            <person name="Rhodes L.D."/>
            <person name="Kaul R."/>
            <person name="Strom M.S."/>
        </authorList>
    </citation>
    <scope>NUCLEOTIDE SEQUENCE [LARGE SCALE GENOMIC DNA]</scope>
    <source>
        <strain>ATCC 33209 / DSM 20767 / JCM 11484 / NBRC 15589 / NCIMB 2235</strain>
    </source>
</reference>
<protein>
    <recommendedName>
        <fullName evidence="1">Holo-[acyl-carrier-protein] synthase</fullName>
        <shortName evidence="1">Holo-ACP synthase</shortName>
        <ecNumber evidence="1">2.7.8.7</ecNumber>
    </recommendedName>
    <alternativeName>
        <fullName evidence="1">4'-phosphopantetheinyl transferase AcpS</fullName>
    </alternativeName>
</protein>
<comment type="function">
    <text evidence="1">Transfers the 4'-phosphopantetheine moiety from coenzyme A to a Ser of acyl-carrier-protein.</text>
</comment>
<comment type="catalytic activity">
    <reaction evidence="1">
        <text>apo-[ACP] + CoA = holo-[ACP] + adenosine 3',5'-bisphosphate + H(+)</text>
        <dbReference type="Rhea" id="RHEA:12068"/>
        <dbReference type="Rhea" id="RHEA-COMP:9685"/>
        <dbReference type="Rhea" id="RHEA-COMP:9690"/>
        <dbReference type="ChEBI" id="CHEBI:15378"/>
        <dbReference type="ChEBI" id="CHEBI:29999"/>
        <dbReference type="ChEBI" id="CHEBI:57287"/>
        <dbReference type="ChEBI" id="CHEBI:58343"/>
        <dbReference type="ChEBI" id="CHEBI:64479"/>
        <dbReference type="EC" id="2.7.8.7"/>
    </reaction>
</comment>
<comment type="cofactor">
    <cofactor evidence="1">
        <name>Mg(2+)</name>
        <dbReference type="ChEBI" id="CHEBI:18420"/>
    </cofactor>
</comment>
<comment type="subcellular location">
    <subcellularLocation>
        <location evidence="1">Cytoplasm</location>
    </subcellularLocation>
</comment>
<comment type="similarity">
    <text evidence="1">Belongs to the P-Pant transferase superfamily. AcpS family.</text>
</comment>
<feature type="chain" id="PRO_1000075651" description="Holo-[acyl-carrier-protein] synthase">
    <location>
        <begin position="1"/>
        <end position="115"/>
    </location>
</feature>
<feature type="binding site" evidence="1">
    <location>
        <position position="8"/>
    </location>
    <ligand>
        <name>Mg(2+)</name>
        <dbReference type="ChEBI" id="CHEBI:18420"/>
    </ligand>
</feature>
<feature type="binding site" evidence="1">
    <location>
        <position position="50"/>
    </location>
    <ligand>
        <name>Mg(2+)</name>
        <dbReference type="ChEBI" id="CHEBI:18420"/>
    </ligand>
</feature>
<sequence>MIIGIGIDVVDVERFRRQLERTPGLLDRLFVPAERSLNTRSLAARFAAKEAVAKALGAPAGMNWQDCWIGLDVNGPTVQTKNTVAAVAEAQGVKRWHLSMSHDGGISTAFVIAES</sequence>
<accession>A9WMF1</accession>
<keyword id="KW-0963">Cytoplasm</keyword>
<keyword id="KW-0275">Fatty acid biosynthesis</keyword>
<keyword id="KW-0276">Fatty acid metabolism</keyword>
<keyword id="KW-0444">Lipid biosynthesis</keyword>
<keyword id="KW-0443">Lipid metabolism</keyword>
<keyword id="KW-0460">Magnesium</keyword>
<keyword id="KW-0479">Metal-binding</keyword>
<keyword id="KW-1185">Reference proteome</keyword>
<keyword id="KW-0808">Transferase</keyword>
<proteinExistence type="inferred from homology"/>
<evidence type="ECO:0000255" key="1">
    <source>
        <dbReference type="HAMAP-Rule" id="MF_00101"/>
    </source>
</evidence>
<name>ACPS_RENSM</name>
<organism>
    <name type="scientific">Renibacterium salmoninarum (strain ATCC 33209 / DSM 20767 / JCM 11484 / NBRC 15589 / NCIMB 2235)</name>
    <dbReference type="NCBI Taxonomy" id="288705"/>
    <lineage>
        <taxon>Bacteria</taxon>
        <taxon>Bacillati</taxon>
        <taxon>Actinomycetota</taxon>
        <taxon>Actinomycetes</taxon>
        <taxon>Micrococcales</taxon>
        <taxon>Micrococcaceae</taxon>
        <taxon>Renibacterium</taxon>
    </lineage>
</organism>
<dbReference type="EC" id="2.7.8.7" evidence="1"/>
<dbReference type="EMBL" id="CP000910">
    <property type="protein sequence ID" value="ABY23464.1"/>
    <property type="molecule type" value="Genomic_DNA"/>
</dbReference>
<dbReference type="RefSeq" id="WP_012245136.1">
    <property type="nucleotide sequence ID" value="NC_010168.1"/>
</dbReference>
<dbReference type="SMR" id="A9WMF1"/>
<dbReference type="STRING" id="288705.RSal33209_1728"/>
<dbReference type="KEGG" id="rsa:RSal33209_1728"/>
<dbReference type="eggNOG" id="COG0736">
    <property type="taxonomic scope" value="Bacteria"/>
</dbReference>
<dbReference type="HOGENOM" id="CLU_089696_0_0_11"/>
<dbReference type="Proteomes" id="UP000002007">
    <property type="component" value="Chromosome"/>
</dbReference>
<dbReference type="GO" id="GO:0005737">
    <property type="term" value="C:cytoplasm"/>
    <property type="evidence" value="ECO:0007669"/>
    <property type="project" value="UniProtKB-SubCell"/>
</dbReference>
<dbReference type="GO" id="GO:0008897">
    <property type="term" value="F:holo-[acyl-carrier-protein] synthase activity"/>
    <property type="evidence" value="ECO:0007669"/>
    <property type="project" value="UniProtKB-UniRule"/>
</dbReference>
<dbReference type="GO" id="GO:0000287">
    <property type="term" value="F:magnesium ion binding"/>
    <property type="evidence" value="ECO:0007669"/>
    <property type="project" value="UniProtKB-UniRule"/>
</dbReference>
<dbReference type="GO" id="GO:0006633">
    <property type="term" value="P:fatty acid biosynthetic process"/>
    <property type="evidence" value="ECO:0007669"/>
    <property type="project" value="UniProtKB-UniRule"/>
</dbReference>
<dbReference type="Gene3D" id="3.90.470.20">
    <property type="entry name" value="4'-phosphopantetheinyl transferase domain"/>
    <property type="match status" value="1"/>
</dbReference>
<dbReference type="HAMAP" id="MF_00101">
    <property type="entry name" value="AcpS"/>
    <property type="match status" value="1"/>
</dbReference>
<dbReference type="InterPro" id="IPR008278">
    <property type="entry name" value="4-PPantetheinyl_Trfase_dom"/>
</dbReference>
<dbReference type="InterPro" id="IPR037143">
    <property type="entry name" value="4-PPantetheinyl_Trfase_dom_sf"/>
</dbReference>
<dbReference type="InterPro" id="IPR002582">
    <property type="entry name" value="ACPS"/>
</dbReference>
<dbReference type="InterPro" id="IPR004568">
    <property type="entry name" value="Ppantetheine-prot_Trfase_dom"/>
</dbReference>
<dbReference type="NCBIfam" id="TIGR00556">
    <property type="entry name" value="pantethn_trn"/>
    <property type="match status" value="1"/>
</dbReference>
<dbReference type="NCBIfam" id="NF000832">
    <property type="entry name" value="PRK00070.3-2"/>
    <property type="match status" value="1"/>
</dbReference>
<dbReference type="Pfam" id="PF01648">
    <property type="entry name" value="ACPS"/>
    <property type="match status" value="1"/>
</dbReference>
<dbReference type="SUPFAM" id="SSF56214">
    <property type="entry name" value="4'-phosphopantetheinyl transferase"/>
    <property type="match status" value="1"/>
</dbReference>
<gene>
    <name evidence="1" type="primary">acpS</name>
    <name type="ordered locus">RSal33209_1728</name>
</gene>